<evidence type="ECO:0000255" key="1">
    <source>
        <dbReference type="HAMAP-Rule" id="MF_00529"/>
    </source>
</evidence>
<sequence>MQSFVQQLKALSSAEDFLQFFGIPFDQKVVNVSRLHILKRFFQYIRQQDVLPEGDEAALFASYHALLLKAYGDFVISTPAQEKVFKVFQDTAGRQHVSLDSLRASLPARTVA</sequence>
<protein>
    <recommendedName>
        <fullName evidence="1">Nitrogenase-stabilizing/protective protein NifW</fullName>
    </recommendedName>
</protein>
<keyword id="KW-0535">Nitrogen fixation</keyword>
<keyword id="KW-1185">Reference proteome</keyword>
<feature type="chain" id="PRO_0000265749" description="Nitrogenase-stabilizing/protective protein NifW">
    <location>
        <begin position="1"/>
        <end position="112"/>
    </location>
</feature>
<reference key="1">
    <citation type="journal article" date="2006" name="Proc. Natl. Acad. Sci. U.S.A.">
        <title>Burkholderia xenovorans LB400 harbors a multi-replicon, 9.73-Mbp genome shaped for versatility.</title>
        <authorList>
            <person name="Chain P.S.G."/>
            <person name="Denef V.J."/>
            <person name="Konstantinidis K.T."/>
            <person name="Vergez L.M."/>
            <person name="Agullo L."/>
            <person name="Reyes V.L."/>
            <person name="Hauser L."/>
            <person name="Cordova M."/>
            <person name="Gomez L."/>
            <person name="Gonzalez M."/>
            <person name="Land M."/>
            <person name="Lao V."/>
            <person name="Larimer F."/>
            <person name="LiPuma J.J."/>
            <person name="Mahenthiralingam E."/>
            <person name="Malfatti S.A."/>
            <person name="Marx C.J."/>
            <person name="Parnell J.J."/>
            <person name="Ramette A."/>
            <person name="Richardson P."/>
            <person name="Seeger M."/>
            <person name="Smith D."/>
            <person name="Spilker T."/>
            <person name="Sul W.J."/>
            <person name="Tsoi T.V."/>
            <person name="Ulrich L.E."/>
            <person name="Zhulin I.B."/>
            <person name="Tiedje J.M."/>
        </authorList>
    </citation>
    <scope>NUCLEOTIDE SEQUENCE [LARGE SCALE GENOMIC DNA]</scope>
    <source>
        <strain>LB400</strain>
    </source>
</reference>
<gene>
    <name evidence="1" type="primary">nifW</name>
    <name type="ordered locus">Bxeno_B1559</name>
    <name type="ORF">Bxe_B1437</name>
</gene>
<proteinExistence type="inferred from homology"/>
<dbReference type="EMBL" id="CP000271">
    <property type="protein sequence ID" value="ABE34527.1"/>
    <property type="molecule type" value="Genomic_DNA"/>
</dbReference>
<dbReference type="RefSeq" id="WP_011491851.1">
    <property type="nucleotide sequence ID" value="NC_007952.1"/>
</dbReference>
<dbReference type="STRING" id="266265.Bxe_B1437"/>
<dbReference type="KEGG" id="bxb:DR64_6743"/>
<dbReference type="KEGG" id="bxe:Bxe_B1437"/>
<dbReference type="PATRIC" id="fig|266265.5.peg.6317"/>
<dbReference type="eggNOG" id="ENOG50330W8">
    <property type="taxonomic scope" value="Bacteria"/>
</dbReference>
<dbReference type="OrthoDB" id="9811868at2"/>
<dbReference type="Proteomes" id="UP000001817">
    <property type="component" value="Chromosome 2"/>
</dbReference>
<dbReference type="GO" id="GO:0009399">
    <property type="term" value="P:nitrogen fixation"/>
    <property type="evidence" value="ECO:0007669"/>
    <property type="project" value="UniProtKB-UniRule"/>
</dbReference>
<dbReference type="HAMAP" id="MF_00529">
    <property type="entry name" value="NifW"/>
    <property type="match status" value="1"/>
</dbReference>
<dbReference type="InterPro" id="IPR004893">
    <property type="entry name" value="NifW"/>
</dbReference>
<dbReference type="NCBIfam" id="NF002009">
    <property type="entry name" value="PRK00810.1"/>
    <property type="match status" value="1"/>
</dbReference>
<dbReference type="Pfam" id="PF03206">
    <property type="entry name" value="NifW"/>
    <property type="match status" value="1"/>
</dbReference>
<dbReference type="PIRSF" id="PIRSF005790">
    <property type="entry name" value="NifW"/>
    <property type="match status" value="1"/>
</dbReference>
<accession>Q13N12</accession>
<name>NIFW_PARXL</name>
<comment type="function">
    <text evidence="1">May protect the nitrogenase Fe-Mo protein from oxidative damage.</text>
</comment>
<comment type="subunit">
    <text evidence="1">Homotrimer; associates with NifD.</text>
</comment>
<comment type="similarity">
    <text evidence="1">Belongs to the NifW family.</text>
</comment>
<organism>
    <name type="scientific">Paraburkholderia xenovorans (strain LB400)</name>
    <dbReference type="NCBI Taxonomy" id="266265"/>
    <lineage>
        <taxon>Bacteria</taxon>
        <taxon>Pseudomonadati</taxon>
        <taxon>Pseudomonadota</taxon>
        <taxon>Betaproteobacteria</taxon>
        <taxon>Burkholderiales</taxon>
        <taxon>Burkholderiaceae</taxon>
        <taxon>Paraburkholderia</taxon>
    </lineage>
</organism>